<gene>
    <name evidence="1" type="primary">rnhA</name>
    <name type="ordered locus">Ent638_0748</name>
</gene>
<organism>
    <name type="scientific">Enterobacter sp. (strain 638)</name>
    <dbReference type="NCBI Taxonomy" id="399742"/>
    <lineage>
        <taxon>Bacteria</taxon>
        <taxon>Pseudomonadati</taxon>
        <taxon>Pseudomonadota</taxon>
        <taxon>Gammaproteobacteria</taxon>
        <taxon>Enterobacterales</taxon>
        <taxon>Enterobacteriaceae</taxon>
        <taxon>Enterobacter</taxon>
    </lineage>
</organism>
<proteinExistence type="inferred from homology"/>
<name>RNH_ENT38</name>
<protein>
    <recommendedName>
        <fullName evidence="1">Ribonuclease H</fullName>
        <shortName evidence="1">RNase H</shortName>
        <ecNumber evidence="1">3.1.26.4</ecNumber>
    </recommendedName>
</protein>
<dbReference type="EC" id="3.1.26.4" evidence="1"/>
<dbReference type="EMBL" id="CP000653">
    <property type="protein sequence ID" value="ABP59434.1"/>
    <property type="molecule type" value="Genomic_DNA"/>
</dbReference>
<dbReference type="SMR" id="A4W6V4"/>
<dbReference type="STRING" id="399742.Ent638_0748"/>
<dbReference type="KEGG" id="ent:Ent638_0748"/>
<dbReference type="eggNOG" id="COG0328">
    <property type="taxonomic scope" value="Bacteria"/>
</dbReference>
<dbReference type="HOGENOM" id="CLU_030894_6_0_6"/>
<dbReference type="OrthoDB" id="7845843at2"/>
<dbReference type="Proteomes" id="UP000000230">
    <property type="component" value="Chromosome"/>
</dbReference>
<dbReference type="GO" id="GO:0005737">
    <property type="term" value="C:cytoplasm"/>
    <property type="evidence" value="ECO:0007669"/>
    <property type="project" value="UniProtKB-SubCell"/>
</dbReference>
<dbReference type="GO" id="GO:0000287">
    <property type="term" value="F:magnesium ion binding"/>
    <property type="evidence" value="ECO:0007669"/>
    <property type="project" value="UniProtKB-UniRule"/>
</dbReference>
<dbReference type="GO" id="GO:0003676">
    <property type="term" value="F:nucleic acid binding"/>
    <property type="evidence" value="ECO:0007669"/>
    <property type="project" value="InterPro"/>
</dbReference>
<dbReference type="GO" id="GO:0004523">
    <property type="term" value="F:RNA-DNA hybrid ribonuclease activity"/>
    <property type="evidence" value="ECO:0007669"/>
    <property type="project" value="UniProtKB-UniRule"/>
</dbReference>
<dbReference type="GO" id="GO:0043137">
    <property type="term" value="P:DNA replication, removal of RNA primer"/>
    <property type="evidence" value="ECO:0007669"/>
    <property type="project" value="TreeGrafter"/>
</dbReference>
<dbReference type="CDD" id="cd09278">
    <property type="entry name" value="RNase_HI_prokaryote_like"/>
    <property type="match status" value="1"/>
</dbReference>
<dbReference type="FunFam" id="3.30.420.10:FF:000008">
    <property type="entry name" value="Ribonuclease H"/>
    <property type="match status" value="1"/>
</dbReference>
<dbReference type="Gene3D" id="3.30.420.10">
    <property type="entry name" value="Ribonuclease H-like superfamily/Ribonuclease H"/>
    <property type="match status" value="1"/>
</dbReference>
<dbReference type="HAMAP" id="MF_00042">
    <property type="entry name" value="RNase_H"/>
    <property type="match status" value="1"/>
</dbReference>
<dbReference type="InterPro" id="IPR050092">
    <property type="entry name" value="RNase_H"/>
</dbReference>
<dbReference type="InterPro" id="IPR012337">
    <property type="entry name" value="RNaseH-like_sf"/>
</dbReference>
<dbReference type="InterPro" id="IPR002156">
    <property type="entry name" value="RNaseH_domain"/>
</dbReference>
<dbReference type="InterPro" id="IPR036397">
    <property type="entry name" value="RNaseH_sf"/>
</dbReference>
<dbReference type="InterPro" id="IPR022892">
    <property type="entry name" value="RNaseHI"/>
</dbReference>
<dbReference type="NCBIfam" id="NF001236">
    <property type="entry name" value="PRK00203.1"/>
    <property type="match status" value="1"/>
</dbReference>
<dbReference type="PANTHER" id="PTHR10642">
    <property type="entry name" value="RIBONUCLEASE H1"/>
    <property type="match status" value="1"/>
</dbReference>
<dbReference type="PANTHER" id="PTHR10642:SF26">
    <property type="entry name" value="RIBONUCLEASE H1"/>
    <property type="match status" value="1"/>
</dbReference>
<dbReference type="Pfam" id="PF00075">
    <property type="entry name" value="RNase_H"/>
    <property type="match status" value="1"/>
</dbReference>
<dbReference type="SUPFAM" id="SSF53098">
    <property type="entry name" value="Ribonuclease H-like"/>
    <property type="match status" value="1"/>
</dbReference>
<dbReference type="PROSITE" id="PS50879">
    <property type="entry name" value="RNASE_H_1"/>
    <property type="match status" value="1"/>
</dbReference>
<comment type="function">
    <text evidence="1">Endonuclease that specifically degrades the RNA of RNA-DNA hybrids.</text>
</comment>
<comment type="catalytic activity">
    <reaction evidence="1">
        <text>Endonucleolytic cleavage to 5'-phosphomonoester.</text>
        <dbReference type="EC" id="3.1.26.4"/>
    </reaction>
</comment>
<comment type="cofactor">
    <cofactor evidence="1">
        <name>Mg(2+)</name>
        <dbReference type="ChEBI" id="CHEBI:18420"/>
    </cofactor>
    <text evidence="1">Binds 1 Mg(2+) ion per subunit. May bind a second metal ion at a regulatory site, or after substrate binding.</text>
</comment>
<comment type="subunit">
    <text evidence="1">Monomer.</text>
</comment>
<comment type="subcellular location">
    <subcellularLocation>
        <location evidence="1">Cytoplasm</location>
    </subcellularLocation>
</comment>
<comment type="similarity">
    <text evidence="1">Belongs to the RNase H family.</text>
</comment>
<feature type="chain" id="PRO_1000074644" description="Ribonuclease H">
    <location>
        <begin position="1"/>
        <end position="155"/>
    </location>
</feature>
<feature type="domain" description="RNase H type-1" evidence="2">
    <location>
        <begin position="1"/>
        <end position="142"/>
    </location>
</feature>
<feature type="binding site" evidence="1">
    <location>
        <position position="10"/>
    </location>
    <ligand>
        <name>Mg(2+)</name>
        <dbReference type="ChEBI" id="CHEBI:18420"/>
        <label>1</label>
    </ligand>
</feature>
<feature type="binding site" evidence="1">
    <location>
        <position position="10"/>
    </location>
    <ligand>
        <name>Mg(2+)</name>
        <dbReference type="ChEBI" id="CHEBI:18420"/>
        <label>2</label>
    </ligand>
</feature>
<feature type="binding site" evidence="1">
    <location>
        <position position="48"/>
    </location>
    <ligand>
        <name>Mg(2+)</name>
        <dbReference type="ChEBI" id="CHEBI:18420"/>
        <label>1</label>
    </ligand>
</feature>
<feature type="binding site" evidence="1">
    <location>
        <position position="70"/>
    </location>
    <ligand>
        <name>Mg(2+)</name>
        <dbReference type="ChEBI" id="CHEBI:18420"/>
        <label>1</label>
    </ligand>
</feature>
<feature type="binding site" evidence="1">
    <location>
        <position position="134"/>
    </location>
    <ligand>
        <name>Mg(2+)</name>
        <dbReference type="ChEBI" id="CHEBI:18420"/>
        <label>2</label>
    </ligand>
</feature>
<reference key="1">
    <citation type="journal article" date="2010" name="PLoS Genet.">
        <title>Genome sequence of the plant growth promoting endophytic bacterium Enterobacter sp. 638.</title>
        <authorList>
            <person name="Taghavi S."/>
            <person name="van der Lelie D."/>
            <person name="Hoffman A."/>
            <person name="Zhang Y.B."/>
            <person name="Walla M.D."/>
            <person name="Vangronsveld J."/>
            <person name="Newman L."/>
            <person name="Monchy S."/>
        </authorList>
    </citation>
    <scope>NUCLEOTIDE SEQUENCE [LARGE SCALE GENOMIC DNA]</scope>
    <source>
        <strain>638</strain>
    </source>
</reference>
<evidence type="ECO:0000255" key="1">
    <source>
        <dbReference type="HAMAP-Rule" id="MF_00042"/>
    </source>
</evidence>
<evidence type="ECO:0000255" key="2">
    <source>
        <dbReference type="PROSITE-ProRule" id="PRU00408"/>
    </source>
</evidence>
<sequence>MTKQVEIFTDGSCLGNPGPGGYGAILRYRGHEKTFNEGYHLTTNNRMELMAAIVALEALKEDCDVVISTDSQYVRQGITQWIHNWKKRGWKTADKKPVKNVDLWKRLDAALSHHTIKWEWVKGHAGHPENERCDELARAAAMNPIQEDVGYQPGS</sequence>
<accession>A4W6V4</accession>
<keyword id="KW-0963">Cytoplasm</keyword>
<keyword id="KW-0255">Endonuclease</keyword>
<keyword id="KW-0378">Hydrolase</keyword>
<keyword id="KW-0460">Magnesium</keyword>
<keyword id="KW-0479">Metal-binding</keyword>
<keyword id="KW-0540">Nuclease</keyword>